<comment type="function">
    <text evidence="1">Has nucleotide phosphatase activity towards ATP, GTP, CTP, TTP and UTP. May hydrolyze nucleoside diphosphates with lower efficiency.</text>
</comment>
<comment type="catalytic activity">
    <reaction evidence="1">
        <text>a ribonucleoside 5'-triphosphate + H2O = a ribonucleoside 5'-diphosphate + phosphate + H(+)</text>
        <dbReference type="Rhea" id="RHEA:23680"/>
        <dbReference type="ChEBI" id="CHEBI:15377"/>
        <dbReference type="ChEBI" id="CHEBI:15378"/>
        <dbReference type="ChEBI" id="CHEBI:43474"/>
        <dbReference type="ChEBI" id="CHEBI:57930"/>
        <dbReference type="ChEBI" id="CHEBI:61557"/>
        <dbReference type="EC" id="3.6.1.15"/>
    </reaction>
</comment>
<comment type="similarity">
    <text evidence="1">Belongs to the THEP1 NTPase family.</text>
</comment>
<gene>
    <name type="ordered locus">Msed_0721</name>
</gene>
<keyword id="KW-0067">ATP-binding</keyword>
<keyword id="KW-0378">Hydrolase</keyword>
<keyword id="KW-0547">Nucleotide-binding</keyword>
<keyword id="KW-1185">Reference proteome</keyword>
<organism>
    <name type="scientific">Metallosphaera sedula (strain ATCC 51363 / DSM 5348 / JCM 9185 / NBRC 15509 / TH2)</name>
    <dbReference type="NCBI Taxonomy" id="399549"/>
    <lineage>
        <taxon>Archaea</taxon>
        <taxon>Thermoproteota</taxon>
        <taxon>Thermoprotei</taxon>
        <taxon>Sulfolobales</taxon>
        <taxon>Sulfolobaceae</taxon>
        <taxon>Metallosphaera</taxon>
    </lineage>
</organism>
<protein>
    <recommendedName>
        <fullName evidence="1">Nucleoside-triphosphatase THEP1</fullName>
        <shortName evidence="1">NTPase THEP1</shortName>
        <ecNumber evidence="1">3.6.1.15</ecNumber>
    </recommendedName>
    <alternativeName>
        <fullName evidence="1">Nucleoside triphosphate phosphohydrolase</fullName>
    </alternativeName>
</protein>
<reference key="1">
    <citation type="journal article" date="2008" name="Appl. Environ. Microbiol.">
        <title>The genome sequence of the metal-mobilizing, extremely thermoacidophilic archaeon Metallosphaera sedula provides insights into bioleaching-associated metabolism.</title>
        <authorList>
            <person name="Auernik K.S."/>
            <person name="Maezato Y."/>
            <person name="Blum P.H."/>
            <person name="Kelly R.M."/>
        </authorList>
    </citation>
    <scope>NUCLEOTIDE SEQUENCE [LARGE SCALE GENOMIC DNA]</scope>
    <source>
        <strain>ATCC 51363 / DSM 5348 / JCM 9185 / NBRC 15509 / TH2</strain>
    </source>
</reference>
<feature type="chain" id="PRO_0000360024" description="Nucleoside-triphosphatase THEP1">
    <location>
        <begin position="1"/>
        <end position="180"/>
    </location>
</feature>
<feature type="binding site" evidence="1">
    <location>
        <begin position="18"/>
        <end position="25"/>
    </location>
    <ligand>
        <name>ATP</name>
        <dbReference type="ChEBI" id="CHEBI:30616"/>
    </ligand>
</feature>
<feature type="binding site" evidence="1">
    <location>
        <begin position="104"/>
        <end position="111"/>
    </location>
    <ligand>
        <name>ATP</name>
        <dbReference type="ChEBI" id="CHEBI:30616"/>
    </ligand>
</feature>
<dbReference type="EC" id="3.6.1.15" evidence="1"/>
<dbReference type="EMBL" id="CP000682">
    <property type="protein sequence ID" value="ABP94896.1"/>
    <property type="molecule type" value="Genomic_DNA"/>
</dbReference>
<dbReference type="RefSeq" id="WP_012020683.1">
    <property type="nucleotide sequence ID" value="NC_009440.1"/>
</dbReference>
<dbReference type="SMR" id="A4YEP4"/>
<dbReference type="STRING" id="399549.Msed_0721"/>
<dbReference type="GeneID" id="91755174"/>
<dbReference type="KEGG" id="mse:Msed_0721"/>
<dbReference type="eggNOG" id="arCOG01034">
    <property type="taxonomic scope" value="Archaea"/>
</dbReference>
<dbReference type="HOGENOM" id="CLU_103145_1_1_2"/>
<dbReference type="Proteomes" id="UP000000242">
    <property type="component" value="Chromosome"/>
</dbReference>
<dbReference type="GO" id="GO:0005524">
    <property type="term" value="F:ATP binding"/>
    <property type="evidence" value="ECO:0007669"/>
    <property type="project" value="UniProtKB-UniRule"/>
</dbReference>
<dbReference type="GO" id="GO:0016887">
    <property type="term" value="F:ATP hydrolysis activity"/>
    <property type="evidence" value="ECO:0007669"/>
    <property type="project" value="InterPro"/>
</dbReference>
<dbReference type="CDD" id="cd19482">
    <property type="entry name" value="RecA-like_Thep1"/>
    <property type="match status" value="1"/>
</dbReference>
<dbReference type="Gene3D" id="3.40.50.300">
    <property type="entry name" value="P-loop containing nucleotide triphosphate hydrolases"/>
    <property type="match status" value="1"/>
</dbReference>
<dbReference type="HAMAP" id="MF_00796">
    <property type="entry name" value="NTPase_1"/>
    <property type="match status" value="1"/>
</dbReference>
<dbReference type="InterPro" id="IPR003593">
    <property type="entry name" value="AAA+_ATPase"/>
</dbReference>
<dbReference type="InterPro" id="IPR004948">
    <property type="entry name" value="Nuc-triphosphatase_THEP1"/>
</dbReference>
<dbReference type="InterPro" id="IPR027417">
    <property type="entry name" value="P-loop_NTPase"/>
</dbReference>
<dbReference type="PANTHER" id="PTHR43146">
    <property type="entry name" value="CANCER-RELATED NUCLEOSIDE-TRIPHOSPHATASE"/>
    <property type="match status" value="1"/>
</dbReference>
<dbReference type="PANTHER" id="PTHR43146:SF1">
    <property type="entry name" value="CANCER-RELATED NUCLEOSIDE-TRIPHOSPHATASE"/>
    <property type="match status" value="1"/>
</dbReference>
<dbReference type="Pfam" id="PF03266">
    <property type="entry name" value="NTPase_1"/>
    <property type="match status" value="1"/>
</dbReference>
<dbReference type="SMART" id="SM00382">
    <property type="entry name" value="AAA"/>
    <property type="match status" value="1"/>
</dbReference>
<dbReference type="SUPFAM" id="SSF52540">
    <property type="entry name" value="P-loop containing nucleoside triphosphate hydrolases"/>
    <property type="match status" value="1"/>
</dbReference>
<name>NTPTH_METS5</name>
<accession>A4YEP4</accession>
<sequence length="180" mass="20480">MQNSPWFKENPLRLFITGRPGVGKTTLIKGLVSELRELKIAGFYTEEVRERGERTGFLFVVIGDGSCPLASTKPIGKERVGRYFVVDSLTLLPQVKQRLEVADLVIMDEIGPMEKKIGDLWKLIQGVLSSNKPVVASVHRSMNIEGKRYELTPVNRDRVREDILNEIRRYFGTKQDTFSL</sequence>
<proteinExistence type="inferred from homology"/>
<evidence type="ECO:0000255" key="1">
    <source>
        <dbReference type="HAMAP-Rule" id="MF_00796"/>
    </source>
</evidence>